<keyword id="KW-1015">Disulfide bond</keyword>
<keyword id="KW-0325">Glycoprotein</keyword>
<keyword id="KW-0328">Glycosyltransferase</keyword>
<keyword id="KW-0333">Golgi apparatus</keyword>
<keyword id="KW-0472">Membrane</keyword>
<keyword id="KW-1185">Reference proteome</keyword>
<keyword id="KW-0735">Signal-anchor</keyword>
<keyword id="KW-0808">Transferase</keyword>
<keyword id="KW-0812">Transmembrane</keyword>
<keyword id="KW-1133">Transmembrane helix</keyword>
<sequence>MRNCKMARVASVLGLVMLSVALLNLSLISYVSLKKENIFATPKYASPGAPRMYMFHAGYRSQFALKFLDPSFVPITNSLTQELQEKPSKWTFNRTAFLHQRQEILQHVDVIKNFSLTKNSVRIGQLMHYDYSSHKYVFSISNNFRSLLPDVSPIMNKHYNICAVVGNSGILTGSQCGQEIDKSDFVFRCNFAPTEAFQRDVGRKTNLTTFNPSILEKYYNNLLTIQDRNNFFLSLKKLDGAILWIPAFFFHTSATVTRTLVDFFVEHRGQLKVQLAWPGNIMQHVNRYWKNKHLSPKRLSTGILMYTLASAICEEIHLYGFWPFGFDPNTREDLPYHYYDKKGTKFTTKWQESHQLPAEFQLLYRMHGEGLTKLTLSHCA</sequence>
<accession>P61644</accession>
<organism>
    <name type="scientific">Pan troglodytes</name>
    <name type="common">Chimpanzee</name>
    <dbReference type="NCBI Taxonomy" id="9598"/>
    <lineage>
        <taxon>Eukaryota</taxon>
        <taxon>Metazoa</taxon>
        <taxon>Chordata</taxon>
        <taxon>Craniata</taxon>
        <taxon>Vertebrata</taxon>
        <taxon>Euteleostomi</taxon>
        <taxon>Mammalia</taxon>
        <taxon>Eutheria</taxon>
        <taxon>Euarchontoglires</taxon>
        <taxon>Primates</taxon>
        <taxon>Haplorrhini</taxon>
        <taxon>Catarrhini</taxon>
        <taxon>Hominidae</taxon>
        <taxon>Pan</taxon>
    </lineage>
</organism>
<reference key="1">
    <citation type="submission" date="2004-04" db="EMBL/GenBank/DDBJ databases">
        <title>Phylogeny of sialyltransferases.</title>
        <authorList>
            <person name="Harduin-Lepers A."/>
            <person name="Martinez-Duncker I."/>
            <person name="Mollicone R."/>
            <person name="Delannoy P."/>
            <person name="Oriol R."/>
        </authorList>
    </citation>
    <scope>NUCLEOTIDE SEQUENCE [MRNA]</scope>
</reference>
<dbReference type="EC" id="2.4.3.-" evidence="1"/>
<dbReference type="EC" id="2.4.3.8" evidence="2"/>
<dbReference type="EMBL" id="AJ697660">
    <property type="protein sequence ID" value="CAG26898.1"/>
    <property type="molecule type" value="mRNA"/>
</dbReference>
<dbReference type="RefSeq" id="NP_001032374.1">
    <property type="nucleotide sequence ID" value="NM_001037297.1"/>
</dbReference>
<dbReference type="SMR" id="P61644"/>
<dbReference type="STRING" id="9598.ENSPTRP00000082404"/>
<dbReference type="CAZy" id="GT29">
    <property type="family name" value="Glycosyltransferase Family 29"/>
</dbReference>
<dbReference type="GlyCosmos" id="P61644">
    <property type="glycosylation" value="3 sites, No reported glycans"/>
</dbReference>
<dbReference type="PaxDb" id="9598-ENSPTRP00000017068"/>
<dbReference type="GeneID" id="455436"/>
<dbReference type="KEGG" id="ptr:455436"/>
<dbReference type="CTD" id="51046"/>
<dbReference type="eggNOG" id="KOG2692">
    <property type="taxonomic scope" value="Eukaryota"/>
</dbReference>
<dbReference type="InParanoid" id="P61644"/>
<dbReference type="UniPathway" id="UPA00378"/>
<dbReference type="Proteomes" id="UP000002277">
    <property type="component" value="Unplaced"/>
</dbReference>
<dbReference type="GO" id="GO:0000139">
    <property type="term" value="C:Golgi membrane"/>
    <property type="evidence" value="ECO:0007669"/>
    <property type="project" value="UniProtKB-SubCell"/>
</dbReference>
<dbReference type="GO" id="GO:0003828">
    <property type="term" value="F:alpha-N-acetylneuraminate alpha-2,8-sialyltransferase activity"/>
    <property type="evidence" value="ECO:0000250"/>
    <property type="project" value="UniProtKB"/>
</dbReference>
<dbReference type="GO" id="GO:0008373">
    <property type="term" value="F:sialyltransferase activity"/>
    <property type="evidence" value="ECO:0000250"/>
    <property type="project" value="UniProtKB"/>
</dbReference>
<dbReference type="GO" id="GO:0006491">
    <property type="term" value="P:N-glycan processing"/>
    <property type="evidence" value="ECO:0000250"/>
    <property type="project" value="UniProtKB"/>
</dbReference>
<dbReference type="GO" id="GO:0009311">
    <property type="term" value="P:oligosaccharide metabolic process"/>
    <property type="evidence" value="ECO:0000318"/>
    <property type="project" value="GO_Central"/>
</dbReference>
<dbReference type="GO" id="GO:0006486">
    <property type="term" value="P:protein glycosylation"/>
    <property type="evidence" value="ECO:0000318"/>
    <property type="project" value="GO_Central"/>
</dbReference>
<dbReference type="GO" id="GO:0097503">
    <property type="term" value="P:sialylation"/>
    <property type="evidence" value="ECO:0000250"/>
    <property type="project" value="UniProtKB"/>
</dbReference>
<dbReference type="CDD" id="cd23970">
    <property type="entry name" value="GT29_ST8SIA3_oligo"/>
    <property type="match status" value="1"/>
</dbReference>
<dbReference type="FunFam" id="3.90.1480.20:FF:000001">
    <property type="entry name" value="ST8 alpha-N-acetyl-neuraminide alpha-2,8-sialyltransferase 2"/>
    <property type="match status" value="1"/>
</dbReference>
<dbReference type="Gene3D" id="3.90.1480.20">
    <property type="entry name" value="Glycosyl transferase family 29"/>
    <property type="match status" value="1"/>
</dbReference>
<dbReference type="InterPro" id="IPR001675">
    <property type="entry name" value="Glyco_trans_29"/>
</dbReference>
<dbReference type="InterPro" id="IPR050943">
    <property type="entry name" value="Glycosyltr_29_Sialyltrsf"/>
</dbReference>
<dbReference type="InterPro" id="IPR038578">
    <property type="entry name" value="GT29-like_sf"/>
</dbReference>
<dbReference type="InterPro" id="IPR012163">
    <property type="entry name" value="Sialyl_trans"/>
</dbReference>
<dbReference type="PANTHER" id="PTHR11987">
    <property type="entry name" value="ALPHA-2,8-SIALYLTRANSFERASE"/>
    <property type="match status" value="1"/>
</dbReference>
<dbReference type="PANTHER" id="PTHR11987:SF36">
    <property type="entry name" value="SIA-ALPHA-2,3-GAL-BETA-1,4-GLCNAC-R:ALPHA 2,8-SIALYLTRANSFERASE"/>
    <property type="match status" value="1"/>
</dbReference>
<dbReference type="Pfam" id="PF00777">
    <property type="entry name" value="Glyco_transf_29"/>
    <property type="match status" value="1"/>
</dbReference>
<dbReference type="PIRSF" id="PIRSF005557">
    <property type="entry name" value="Sialyl_trans"/>
    <property type="match status" value="1"/>
</dbReference>
<name>SIA8C_PANTR</name>
<gene>
    <name evidence="1" type="primary">ST8SIA3</name>
    <name type="synonym">SIAT8C</name>
</gene>
<evidence type="ECO:0000250" key="1">
    <source>
        <dbReference type="UniProtKB" id="O43173"/>
    </source>
</evidence>
<evidence type="ECO:0000250" key="2">
    <source>
        <dbReference type="UniProtKB" id="Q64689"/>
    </source>
</evidence>
<evidence type="ECO:0000255" key="3"/>
<evidence type="ECO:0000305" key="4"/>
<comment type="function">
    <text evidence="1 2">Catalyzes the transfer of sialic acid from a CMP-linked sialic acid donor onto a terminal alpha-2,3-, alpha-2,6-, or alpha-2,8-linked sialic acid of an acceptor, such as N-linked oligosaccharides of glycoproteins and glycolipids through alpha-2,8-linkages. Forms oligosialic and polysialic acid on various sialylated N-acetyllactosamine oligosaccharides of glycoproteins, including FETUB N-glycans, a2-HS-glycoprotein (AHSG) and alpha 2,3-sialylated glycosphingolipids, such as alpha 2,3-sialylparagloboside and ganglioside GM3 and to a lesser extent NCAM1 N-glycans (By similarity). However, it is much more specific to N-linked oligosaccharides of glycoproteins than glycosphingolipids. 2,3-sialylparagloboside serves as the best acceptor substrate among the glycolipids (By similarity). alpha-Neu5Ac-(2-&gt;8)-alpha-Neu5Ac-(2-&gt;3)-beta-D-Gal-(1-&gt;4)-6S-D-GlcNAc and monosialyl and disialyl N-acetyllactosamines are the best acceptor substrates among glycoproteins (By similarity). May plays critical role in the striatum by mediating the formation of disialylated and trisialylated terminal glycotopes on N- and O-glycans of specific striatal proteins, regulating their distribution in lipid rafts, affecting their interaction with other binding partners, and subsequently modulating striatal functions (By similarity).</text>
</comment>
<comment type="catalytic activity">
    <reaction evidence="1">
        <text>[N-acetyl-alpha-D-neuraminosyl-(2-&gt;8)](n) + CMP-N-acetyl-beta-neuraminate = [N-acetyl-alpha-D-neuraminosyl-(2-&gt;8)](n+1) + CMP + H(+)</text>
        <dbReference type="Rhea" id="RHEA:77367"/>
        <dbReference type="Rhea" id="RHEA-COMP:14315"/>
        <dbReference type="Rhea" id="RHEA-COMP:18878"/>
        <dbReference type="ChEBI" id="CHEBI:15378"/>
        <dbReference type="ChEBI" id="CHEBI:57812"/>
        <dbReference type="ChEBI" id="CHEBI:60377"/>
        <dbReference type="ChEBI" id="CHEBI:139252"/>
    </reaction>
    <physiologicalReaction direction="left-to-right" evidence="1">
        <dbReference type="Rhea" id="RHEA:77368"/>
    </physiologicalReaction>
</comment>
<comment type="catalytic activity">
    <reaction evidence="1">
        <text>alpha-Neu5Ac-(2-&gt;3)-beta-D-Gal-(1-&gt;4)-6S-D-GlcNAc + CMP-N-acetyl-beta-neuraminate = alpha-Neu5Ac-(2-&gt;8)-alpha-Neu5Ac-(2-&gt;3)-beta-D-Gal-(1-&gt;4)-6S-D-GlcNAc + CMP + H(+)</text>
        <dbReference type="Rhea" id="RHEA:77391"/>
        <dbReference type="ChEBI" id="CHEBI:15378"/>
        <dbReference type="ChEBI" id="CHEBI:57812"/>
        <dbReference type="ChEBI" id="CHEBI:60377"/>
        <dbReference type="ChEBI" id="CHEBI:197339"/>
        <dbReference type="ChEBI" id="CHEBI:197340"/>
    </reaction>
    <physiologicalReaction direction="left-to-right" evidence="1">
        <dbReference type="Rhea" id="RHEA:77392"/>
    </physiologicalReaction>
</comment>
<comment type="catalytic activity">
    <reaction evidence="2">
        <text>a ganglioside GM3 (d18:1(4E)) + CMP-N-acetyl-beta-neuraminate = a ganglioside GD3 (d18:1(4E)) + CMP + H(+)</text>
        <dbReference type="Rhea" id="RHEA:41760"/>
        <dbReference type="ChEBI" id="CHEBI:15378"/>
        <dbReference type="ChEBI" id="CHEBI:57812"/>
        <dbReference type="ChEBI" id="CHEBI:60065"/>
        <dbReference type="ChEBI" id="CHEBI:60377"/>
        <dbReference type="ChEBI" id="CHEBI:78436"/>
    </reaction>
    <physiologicalReaction direction="left-to-right" evidence="2">
        <dbReference type="Rhea" id="RHEA:41761"/>
    </physiologicalReaction>
</comment>
<comment type="catalytic activity">
    <reaction evidence="2">
        <text>a ganglioside GM3 + CMP-N-acetyl-beta-neuraminate = a ganglioside GD3 + CMP + H(+)</text>
        <dbReference type="Rhea" id="RHEA:48288"/>
        <dbReference type="ChEBI" id="CHEBI:15378"/>
        <dbReference type="ChEBI" id="CHEBI:57812"/>
        <dbReference type="ChEBI" id="CHEBI:60377"/>
        <dbReference type="ChEBI" id="CHEBI:79210"/>
        <dbReference type="ChEBI" id="CHEBI:79214"/>
    </reaction>
    <physiologicalReaction direction="left-to-right" evidence="2">
        <dbReference type="Rhea" id="RHEA:48289"/>
    </physiologicalReaction>
</comment>
<comment type="catalytic activity">
    <reaction evidence="2">
        <text>an N-acetyl-alpha-neuraminyl-(2-&gt;3)-beta-D-galactosyl derivative + CMP-N-acetyl-beta-neuraminate = an N-acetyl-alpha-neuraminyl-(2-&gt;8)-N-acetyl-alpha-neuraminyl-(2-&gt;3)-beta-D-galactosyl derivative + CMP + H(+)</text>
        <dbReference type="Rhea" id="RHEA:19313"/>
        <dbReference type="ChEBI" id="CHEBI:15378"/>
        <dbReference type="ChEBI" id="CHEBI:57812"/>
        <dbReference type="ChEBI" id="CHEBI:60377"/>
        <dbReference type="ChEBI" id="CHEBI:140308"/>
        <dbReference type="ChEBI" id="CHEBI:140309"/>
        <dbReference type="EC" id="2.4.3.8"/>
    </reaction>
    <physiologicalReaction direction="left-to-right" evidence="2">
        <dbReference type="Rhea" id="RHEA:19314"/>
    </physiologicalReaction>
</comment>
<comment type="catalytic activity">
    <reaction evidence="2">
        <text>an N-acetyl-alpha-neuraminyl-(2-&gt;3)-beta-D-galactosyl-(1-&gt;4)-N-acetyl-beta-D-glucosaminyl derivative + CMP-N-acetyl-beta-neuraminate = an alpha-Neu5Ac-(2-&gt;8)-alpha-Neu5Ac-(2-&gt;3)-beta-D-Gal-(1-&gt;4)-beta-D-GlcNAc derivative + CMP + H(+)</text>
        <dbReference type="Rhea" id="RHEA:77387"/>
        <dbReference type="ChEBI" id="CHEBI:15378"/>
        <dbReference type="ChEBI" id="CHEBI:57812"/>
        <dbReference type="ChEBI" id="CHEBI:60377"/>
        <dbReference type="ChEBI" id="CHEBI:136545"/>
        <dbReference type="ChEBI" id="CHEBI:197334"/>
    </reaction>
    <physiologicalReaction direction="left-to-right" evidence="2">
        <dbReference type="Rhea" id="RHEA:77388"/>
    </physiologicalReaction>
</comment>
<comment type="pathway">
    <text evidence="1">Protein modification; protein glycosylation.</text>
</comment>
<comment type="subunit">
    <text evidence="1">Homodimer.</text>
</comment>
<comment type="subcellular location">
    <subcellularLocation>
        <location evidence="1">Golgi apparatus membrane</location>
        <topology evidence="1">Single-pass type II membrane protein</topology>
    </subcellularLocation>
</comment>
<comment type="PTM">
    <text evidence="1">Autopolysialylated.</text>
</comment>
<comment type="similarity">
    <text evidence="4">Belongs to the glycosyltransferase 29 family.</text>
</comment>
<protein>
    <recommendedName>
        <fullName evidence="1">Alpha-N-acetylneuraminate alpha-2,8-sialyltransferase ST8SIA3</fullName>
        <ecNumber evidence="1">2.4.3.-</ecNumber>
    </recommendedName>
    <alternativeName>
        <fullName>Alpha-2,8-sialyltransferase 8C</fullName>
    </alternativeName>
    <alternativeName>
        <fullName>Alpha-2,8-sialyltransferase III</fullName>
    </alternativeName>
    <alternativeName>
        <fullName>Ganglioside GD3 synthase ST8SIA3</fullName>
        <ecNumber evidence="2">2.4.3.8</ecNumber>
    </alternativeName>
    <alternativeName>
        <fullName>ST8 alpha-N-acetyl-neuraminide alpha-2,8-sialyltransferase 3</fullName>
    </alternativeName>
    <alternativeName>
        <fullName evidence="1">Sia-a2,3-Gal-b1,4-Glc-NAc-R:a2,8-sialyltransferase</fullName>
    </alternativeName>
    <alternativeName>
        <fullName>Sialyltransferase 8C</fullName>
        <shortName>SIAT8-C</shortName>
    </alternativeName>
    <alternativeName>
        <fullName>Sialyltransferase St8Sia III</fullName>
        <shortName>ST8SiaIII</shortName>
    </alternativeName>
</protein>
<proteinExistence type="evidence at transcript level"/>
<feature type="chain" id="PRO_0000149291" description="Alpha-N-acetylneuraminate alpha-2,8-sialyltransferase ST8SIA3">
    <location>
        <begin position="1"/>
        <end position="380"/>
    </location>
</feature>
<feature type="topological domain" description="Cytoplasmic" evidence="3">
    <location>
        <begin position="1"/>
        <end position="9"/>
    </location>
</feature>
<feature type="transmembrane region" description="Helical; Signal-anchor for type II membrane protein" evidence="3">
    <location>
        <begin position="10"/>
        <end position="33"/>
    </location>
</feature>
<feature type="topological domain" description="Lumenal" evidence="3">
    <location>
        <begin position="34"/>
        <end position="380"/>
    </location>
</feature>
<feature type="active site" description="Proton donor/acceptor" evidence="1">
    <location>
        <position position="354"/>
    </location>
</feature>
<feature type="binding site" evidence="1">
    <location>
        <position position="167"/>
    </location>
    <ligand>
        <name>CMP-N-acetyl-beta-neuraminate</name>
        <dbReference type="ChEBI" id="CHEBI:57812"/>
    </ligand>
</feature>
<feature type="binding site" evidence="1">
    <location>
        <position position="190"/>
    </location>
    <ligand>
        <name>CMP-N-acetyl-beta-neuraminate</name>
        <dbReference type="ChEBI" id="CHEBI:57812"/>
    </ligand>
</feature>
<feature type="binding site" evidence="1">
    <location>
        <position position="300"/>
    </location>
    <ligand>
        <name>CMP-N-acetyl-beta-neuraminate</name>
        <dbReference type="ChEBI" id="CHEBI:57812"/>
    </ligand>
</feature>
<feature type="binding site" evidence="1">
    <location>
        <position position="301"/>
    </location>
    <ligand>
        <name>CMP-N-acetyl-beta-neuraminate</name>
        <dbReference type="ChEBI" id="CHEBI:57812"/>
    </ligand>
</feature>
<feature type="binding site" evidence="1">
    <location>
        <position position="302"/>
    </location>
    <ligand>
        <name>CMP-N-acetyl-beta-neuraminate</name>
        <dbReference type="ChEBI" id="CHEBI:57812"/>
    </ligand>
</feature>
<feature type="binding site" evidence="1">
    <location>
        <position position="322"/>
    </location>
    <ligand>
        <name>CMP-N-acetyl-beta-neuraminate</name>
        <dbReference type="ChEBI" id="CHEBI:57812"/>
    </ligand>
</feature>
<feature type="binding site" evidence="1">
    <location>
        <position position="336"/>
    </location>
    <ligand>
        <name>CMP-N-acetyl-beta-neuraminate</name>
        <dbReference type="ChEBI" id="CHEBI:57812"/>
    </ligand>
</feature>
<feature type="binding site" evidence="1">
    <location>
        <position position="337"/>
    </location>
    <ligand>
        <name>CMP-N-acetyl-beta-neuraminate</name>
        <dbReference type="ChEBI" id="CHEBI:57812"/>
    </ligand>
</feature>
<feature type="glycosylation site" description="N-linked (GlcNAc...) asparagine" evidence="3">
    <location>
        <position position="93"/>
    </location>
</feature>
<feature type="glycosylation site" description="N-linked (GlcNAc...) asparagine" evidence="3">
    <location>
        <position position="113"/>
    </location>
</feature>
<feature type="glycosylation site" description="N-linked (GlcNAc...) asparagine" evidence="3">
    <location>
        <position position="206"/>
    </location>
</feature>
<feature type="disulfide bond" evidence="1">
    <location>
        <begin position="162"/>
        <end position="313"/>
    </location>
</feature>
<feature type="disulfide bond" evidence="1">
    <location>
        <begin position="176"/>
        <end position="379"/>
    </location>
</feature>